<accession>B2VGA5</accession>
<protein>
    <recommendedName>
        <fullName evidence="1">tRNA/tmRNA (uracil-C(5))-methyltransferase</fullName>
        <ecNumber evidence="1">2.1.1.-</ecNumber>
        <ecNumber evidence="1">2.1.1.35</ecNumber>
    </recommendedName>
    <alternativeName>
        <fullName evidence="1">tRNA (uracil(54)-C(5))-methyltransferase</fullName>
    </alternativeName>
    <alternativeName>
        <fullName evidence="1">tRNA(m5U54)-methyltransferase</fullName>
        <shortName evidence="1">RUMT</shortName>
    </alternativeName>
    <alternativeName>
        <fullName evidence="1">tmRNA (uracil(341)-C(5))-methyltransferase</fullName>
    </alternativeName>
</protein>
<proteinExistence type="inferred from homology"/>
<evidence type="ECO:0000255" key="1">
    <source>
        <dbReference type="HAMAP-Rule" id="MF_01011"/>
    </source>
</evidence>
<comment type="function">
    <text evidence="1">Dual-specificity methyltransferase that catalyzes the formation of 5-methyluridine at position 54 (m5U54) in all tRNAs, and that of position 341 (m5U341) in tmRNA (transfer-mRNA).</text>
</comment>
<comment type="catalytic activity">
    <reaction evidence="1">
        <text>uridine(54) in tRNA + S-adenosyl-L-methionine = 5-methyluridine(54) in tRNA + S-adenosyl-L-homocysteine + H(+)</text>
        <dbReference type="Rhea" id="RHEA:42712"/>
        <dbReference type="Rhea" id="RHEA-COMP:10167"/>
        <dbReference type="Rhea" id="RHEA-COMP:10193"/>
        <dbReference type="ChEBI" id="CHEBI:15378"/>
        <dbReference type="ChEBI" id="CHEBI:57856"/>
        <dbReference type="ChEBI" id="CHEBI:59789"/>
        <dbReference type="ChEBI" id="CHEBI:65315"/>
        <dbReference type="ChEBI" id="CHEBI:74447"/>
        <dbReference type="EC" id="2.1.1.35"/>
    </reaction>
</comment>
<comment type="catalytic activity">
    <reaction evidence="1">
        <text>uridine(341) in tmRNA + S-adenosyl-L-methionine = 5-methyluridine(341) in tmRNA + S-adenosyl-L-homocysteine + H(+)</text>
        <dbReference type="Rhea" id="RHEA:43612"/>
        <dbReference type="Rhea" id="RHEA-COMP:10630"/>
        <dbReference type="Rhea" id="RHEA-COMP:10631"/>
        <dbReference type="ChEBI" id="CHEBI:15378"/>
        <dbReference type="ChEBI" id="CHEBI:57856"/>
        <dbReference type="ChEBI" id="CHEBI:59789"/>
        <dbReference type="ChEBI" id="CHEBI:65315"/>
        <dbReference type="ChEBI" id="CHEBI:74447"/>
    </reaction>
</comment>
<comment type="similarity">
    <text evidence="1">Belongs to the class I-like SAM-binding methyltransferase superfamily. RNA M5U methyltransferase family. TrmA subfamily.</text>
</comment>
<gene>
    <name evidence="1" type="primary">trmA</name>
    <name type="ordered locus">ETA_01430</name>
</gene>
<feature type="chain" id="PRO_1000198537" description="tRNA/tmRNA (uracil-C(5))-methyltransferase">
    <location>
        <begin position="1"/>
        <end position="367"/>
    </location>
</feature>
<feature type="active site" description="Nucleophile" evidence="1">
    <location>
        <position position="324"/>
    </location>
</feature>
<feature type="active site" description="Proton acceptor" evidence="1">
    <location>
        <position position="358"/>
    </location>
</feature>
<feature type="binding site" evidence="1">
    <location>
        <position position="190"/>
    </location>
    <ligand>
        <name>S-adenosyl-L-methionine</name>
        <dbReference type="ChEBI" id="CHEBI:59789"/>
    </ligand>
</feature>
<feature type="binding site" evidence="1">
    <location>
        <position position="218"/>
    </location>
    <ligand>
        <name>S-adenosyl-L-methionine</name>
        <dbReference type="ChEBI" id="CHEBI:59789"/>
    </ligand>
</feature>
<feature type="binding site" evidence="1">
    <location>
        <position position="223"/>
    </location>
    <ligand>
        <name>S-adenosyl-L-methionine</name>
        <dbReference type="ChEBI" id="CHEBI:59789"/>
    </ligand>
</feature>
<feature type="binding site" evidence="1">
    <location>
        <position position="239"/>
    </location>
    <ligand>
        <name>S-adenosyl-L-methionine</name>
        <dbReference type="ChEBI" id="CHEBI:59789"/>
    </ligand>
</feature>
<feature type="binding site" evidence="1">
    <location>
        <position position="299"/>
    </location>
    <ligand>
        <name>S-adenosyl-L-methionine</name>
        <dbReference type="ChEBI" id="CHEBI:59789"/>
    </ligand>
</feature>
<dbReference type="EC" id="2.1.1.-" evidence="1"/>
<dbReference type="EC" id="2.1.1.35" evidence="1"/>
<dbReference type="EMBL" id="CU468135">
    <property type="protein sequence ID" value="CAO95189.1"/>
    <property type="molecule type" value="Genomic_DNA"/>
</dbReference>
<dbReference type="RefSeq" id="WP_012439913.1">
    <property type="nucleotide sequence ID" value="NC_010694.1"/>
</dbReference>
<dbReference type="SMR" id="B2VGA5"/>
<dbReference type="STRING" id="465817.ETA_01430"/>
<dbReference type="KEGG" id="eta:ETA_01430"/>
<dbReference type="eggNOG" id="COG2265">
    <property type="taxonomic scope" value="Bacteria"/>
</dbReference>
<dbReference type="HOGENOM" id="CLU_043022_0_0_6"/>
<dbReference type="OrthoDB" id="9804590at2"/>
<dbReference type="Proteomes" id="UP000001726">
    <property type="component" value="Chromosome"/>
</dbReference>
<dbReference type="GO" id="GO:0005829">
    <property type="term" value="C:cytosol"/>
    <property type="evidence" value="ECO:0007669"/>
    <property type="project" value="TreeGrafter"/>
</dbReference>
<dbReference type="GO" id="GO:0019843">
    <property type="term" value="F:rRNA binding"/>
    <property type="evidence" value="ECO:0007669"/>
    <property type="project" value="TreeGrafter"/>
</dbReference>
<dbReference type="GO" id="GO:0030697">
    <property type="term" value="F:tRNA (uracil(54)-C5)-methyltransferase activity, S-adenosyl methionine-dependent"/>
    <property type="evidence" value="ECO:0007669"/>
    <property type="project" value="UniProtKB-UniRule"/>
</dbReference>
<dbReference type="GO" id="GO:0000049">
    <property type="term" value="F:tRNA binding"/>
    <property type="evidence" value="ECO:0007669"/>
    <property type="project" value="TreeGrafter"/>
</dbReference>
<dbReference type="GO" id="GO:0030488">
    <property type="term" value="P:tRNA methylation"/>
    <property type="evidence" value="ECO:0007669"/>
    <property type="project" value="UniProtKB-UniRule"/>
</dbReference>
<dbReference type="CDD" id="cd02440">
    <property type="entry name" value="AdoMet_MTases"/>
    <property type="match status" value="1"/>
</dbReference>
<dbReference type="FunFam" id="2.40.50.1070:FF:000001">
    <property type="entry name" value="tRNA/tmRNA (uracil-C(5))-methyltransferase"/>
    <property type="match status" value="1"/>
</dbReference>
<dbReference type="FunFam" id="3.40.50.150:FF:000012">
    <property type="entry name" value="tRNA/tmRNA (uracil-C(5))-methyltransferase"/>
    <property type="match status" value="1"/>
</dbReference>
<dbReference type="Gene3D" id="2.40.50.1070">
    <property type="match status" value="1"/>
</dbReference>
<dbReference type="Gene3D" id="3.40.50.150">
    <property type="entry name" value="Vaccinia Virus protein VP39"/>
    <property type="match status" value="1"/>
</dbReference>
<dbReference type="HAMAP" id="MF_01011">
    <property type="entry name" value="RNA_methyltr_TrmA"/>
    <property type="match status" value="1"/>
</dbReference>
<dbReference type="InterPro" id="IPR030390">
    <property type="entry name" value="MeTrfase_TrmA_AS"/>
</dbReference>
<dbReference type="InterPro" id="IPR030391">
    <property type="entry name" value="MeTrfase_TrmA_CS"/>
</dbReference>
<dbReference type="InterPro" id="IPR029063">
    <property type="entry name" value="SAM-dependent_MTases_sf"/>
</dbReference>
<dbReference type="InterPro" id="IPR011869">
    <property type="entry name" value="TrmA_MeTrfase"/>
</dbReference>
<dbReference type="InterPro" id="IPR010280">
    <property type="entry name" value="U5_MeTrfase_fam"/>
</dbReference>
<dbReference type="NCBIfam" id="TIGR02143">
    <property type="entry name" value="trmA_only"/>
    <property type="match status" value="1"/>
</dbReference>
<dbReference type="PANTHER" id="PTHR47790">
    <property type="entry name" value="TRNA/TMRNA (URACIL-C(5))-METHYLTRANSFERASE"/>
    <property type="match status" value="1"/>
</dbReference>
<dbReference type="PANTHER" id="PTHR47790:SF2">
    <property type="entry name" value="TRNA_TMRNA (URACIL-C(5))-METHYLTRANSFERASE"/>
    <property type="match status" value="1"/>
</dbReference>
<dbReference type="Pfam" id="PF05958">
    <property type="entry name" value="tRNA_U5-meth_tr"/>
    <property type="match status" value="1"/>
</dbReference>
<dbReference type="SUPFAM" id="SSF53335">
    <property type="entry name" value="S-adenosyl-L-methionine-dependent methyltransferases"/>
    <property type="match status" value="1"/>
</dbReference>
<dbReference type="PROSITE" id="PS51687">
    <property type="entry name" value="SAM_MT_RNA_M5U"/>
    <property type="match status" value="1"/>
</dbReference>
<dbReference type="PROSITE" id="PS01230">
    <property type="entry name" value="TRMA_1"/>
    <property type="match status" value="1"/>
</dbReference>
<dbReference type="PROSITE" id="PS01231">
    <property type="entry name" value="TRMA_2"/>
    <property type="match status" value="1"/>
</dbReference>
<reference key="1">
    <citation type="journal article" date="2008" name="Environ. Microbiol.">
        <title>The genome of Erwinia tasmaniensis strain Et1/99, a non-pathogenic bacterium in the genus Erwinia.</title>
        <authorList>
            <person name="Kube M."/>
            <person name="Migdoll A.M."/>
            <person name="Mueller I."/>
            <person name="Kuhl H."/>
            <person name="Beck A."/>
            <person name="Reinhardt R."/>
            <person name="Geider K."/>
        </authorList>
    </citation>
    <scope>NUCLEOTIDE SEQUENCE [LARGE SCALE GENOMIC DNA]</scope>
    <source>
        <strain>DSM 17950 / CFBP 7177 / CIP 109463 / NCPPB 4357 / Et1/99</strain>
    </source>
</reference>
<keyword id="KW-0489">Methyltransferase</keyword>
<keyword id="KW-1185">Reference proteome</keyword>
<keyword id="KW-0949">S-adenosyl-L-methionine</keyword>
<keyword id="KW-0808">Transferase</keyword>
<keyword id="KW-0819">tRNA processing</keyword>
<organism>
    <name type="scientific">Erwinia tasmaniensis (strain DSM 17950 / CFBP 7177 / CIP 109463 / NCPPB 4357 / Et1/99)</name>
    <dbReference type="NCBI Taxonomy" id="465817"/>
    <lineage>
        <taxon>Bacteria</taxon>
        <taxon>Pseudomonadati</taxon>
        <taxon>Pseudomonadota</taxon>
        <taxon>Gammaproteobacteria</taxon>
        <taxon>Enterobacterales</taxon>
        <taxon>Erwiniaceae</taxon>
        <taxon>Erwinia</taxon>
    </lineage>
</organism>
<name>TRMA_ERWT9</name>
<sequence>MTPEQLPIEHYEDQLAEKVTRLTTMMSAFNAPEVEVFRSAVSHYRMRAEFRIWHEGDDLYHIIFDQQTRERIRVDSFPAASELINRLMPRLIEKIRDQRLLRFKLFQVDYLSTVSGQIVVSMLYHRKLDEEWQQAAAALRDSLRAEGFDLHLIGRATKTKICLDQDYVDERLTVDGREMVYRQVENSFTQPNAAVNVKMLEWALDSTRHSAGDLLELYCGNGNFSLALARNFNRVLATEIAKPSVASAQYNIAVNQIDNVQIIRMAAEEFTQAMNGERSFRRLEGIDLTRYQCETIFVDPPRSGLDDETVKMVQAYPRILYISCNPQTLCENLTALSTTHDVTRLALFDQFPYTHHMECGVLLTRRH</sequence>